<sequence>MIIYLHGFDSNSPGNHEKVLQLQFIDPDVRLVSYSTRHPKHDMQHLLKEVDKMLQLNVDERPLICGVGLGGYWAERIGFLCDIRQVVFNPNLFPYENMEGKIDRPEEYADIATKCVTNFREKNRDRCLVILSRHDEALDSQRSAQALHPFYEIVWDEEQTHKFKNISPYLQRIKAFKTLG</sequence>
<protein>
    <recommendedName>
        <fullName evidence="1">UPF0227 protein YcfP</fullName>
    </recommendedName>
</protein>
<evidence type="ECO:0000255" key="1">
    <source>
        <dbReference type="HAMAP-Rule" id="MF_01047"/>
    </source>
</evidence>
<organism>
    <name type="scientific">Salmonella paratyphi A (strain ATCC 9150 / SARB42)</name>
    <dbReference type="NCBI Taxonomy" id="295319"/>
    <lineage>
        <taxon>Bacteria</taxon>
        <taxon>Pseudomonadati</taxon>
        <taxon>Pseudomonadota</taxon>
        <taxon>Gammaproteobacteria</taxon>
        <taxon>Enterobacterales</taxon>
        <taxon>Enterobacteriaceae</taxon>
        <taxon>Salmonella</taxon>
    </lineage>
</organism>
<comment type="similarity">
    <text evidence="1">Belongs to the UPF0227 family.</text>
</comment>
<proteinExistence type="inferred from homology"/>
<gene>
    <name evidence="1" type="primary">ycfP</name>
    <name type="ordered locus">SPA1641</name>
</gene>
<name>YCFP_SALPA</name>
<accession>Q5PGR9</accession>
<reference key="1">
    <citation type="journal article" date="2004" name="Nat. Genet.">
        <title>Comparison of genome degradation in Paratyphi A and Typhi, human-restricted serovars of Salmonella enterica that cause typhoid.</title>
        <authorList>
            <person name="McClelland M."/>
            <person name="Sanderson K.E."/>
            <person name="Clifton S.W."/>
            <person name="Latreille P."/>
            <person name="Porwollik S."/>
            <person name="Sabo A."/>
            <person name="Meyer R."/>
            <person name="Bieri T."/>
            <person name="Ozersky P."/>
            <person name="McLellan M."/>
            <person name="Harkins C.R."/>
            <person name="Wang C."/>
            <person name="Nguyen C."/>
            <person name="Berghoff A."/>
            <person name="Elliott G."/>
            <person name="Kohlberg S."/>
            <person name="Strong C."/>
            <person name="Du F."/>
            <person name="Carter J."/>
            <person name="Kremizki C."/>
            <person name="Layman D."/>
            <person name="Leonard S."/>
            <person name="Sun H."/>
            <person name="Fulton L."/>
            <person name="Nash W."/>
            <person name="Miner T."/>
            <person name="Minx P."/>
            <person name="Delehaunty K."/>
            <person name="Fronick C."/>
            <person name="Magrini V."/>
            <person name="Nhan M."/>
            <person name="Warren W."/>
            <person name="Florea L."/>
            <person name="Spieth J."/>
            <person name="Wilson R.K."/>
        </authorList>
    </citation>
    <scope>NUCLEOTIDE SEQUENCE [LARGE SCALE GENOMIC DNA]</scope>
    <source>
        <strain>ATCC 9150 / SARB42</strain>
    </source>
</reference>
<feature type="chain" id="PRO_1000064294" description="UPF0227 protein YcfP">
    <location>
        <begin position="1"/>
        <end position="180"/>
    </location>
</feature>
<dbReference type="EMBL" id="CP000026">
    <property type="protein sequence ID" value="AAV77568.1"/>
    <property type="molecule type" value="Genomic_DNA"/>
</dbReference>
<dbReference type="RefSeq" id="WP_000587944.1">
    <property type="nucleotide sequence ID" value="NC_006511.1"/>
</dbReference>
<dbReference type="SMR" id="Q5PGR9"/>
<dbReference type="ESTHER" id="salty-ycfp">
    <property type="family name" value="abh_upf00227"/>
</dbReference>
<dbReference type="KEGG" id="spt:SPA1641"/>
<dbReference type="HOGENOM" id="CLU_128769_0_0_6"/>
<dbReference type="Proteomes" id="UP000008185">
    <property type="component" value="Chromosome"/>
</dbReference>
<dbReference type="FunFam" id="3.40.50.1820:FF:000007">
    <property type="entry name" value="UPF0227 protein YcfP"/>
    <property type="match status" value="1"/>
</dbReference>
<dbReference type="Gene3D" id="3.40.50.1820">
    <property type="entry name" value="alpha/beta hydrolase"/>
    <property type="match status" value="1"/>
</dbReference>
<dbReference type="HAMAP" id="MF_01047">
    <property type="entry name" value="UPF0227"/>
    <property type="match status" value="1"/>
</dbReference>
<dbReference type="InterPro" id="IPR029058">
    <property type="entry name" value="AB_hydrolase_fold"/>
</dbReference>
<dbReference type="InterPro" id="IPR022987">
    <property type="entry name" value="UPF0227"/>
</dbReference>
<dbReference type="InterPro" id="IPR008886">
    <property type="entry name" value="UPF0227/Esterase_YqiA"/>
</dbReference>
<dbReference type="NCBIfam" id="NF003431">
    <property type="entry name" value="PRK04940.1"/>
    <property type="match status" value="1"/>
</dbReference>
<dbReference type="PANTHER" id="PTHR35602">
    <property type="entry name" value="ESTERASE YQIA-RELATED"/>
    <property type="match status" value="1"/>
</dbReference>
<dbReference type="PANTHER" id="PTHR35602:SF2">
    <property type="entry name" value="UPF0227 PROTEIN YCFP"/>
    <property type="match status" value="1"/>
</dbReference>
<dbReference type="Pfam" id="PF05728">
    <property type="entry name" value="UPF0227"/>
    <property type="match status" value="1"/>
</dbReference>
<dbReference type="SUPFAM" id="SSF53474">
    <property type="entry name" value="alpha/beta-Hydrolases"/>
    <property type="match status" value="1"/>
</dbReference>